<reference key="1">
    <citation type="journal article" date="1998" name="Science">
        <title>Genome sequence of the nematode C. elegans: a platform for investigating biology.</title>
        <authorList>
            <consortium name="The C. elegans sequencing consortium"/>
        </authorList>
    </citation>
    <scope>NUCLEOTIDE SEQUENCE [LARGE SCALE GENOMIC DNA]</scope>
    <source>
        <strain>Bristol N2</strain>
    </source>
</reference>
<reference key="2">
    <citation type="journal article" date="2003" name="Eur. J. Biochem.">
        <title>The astacin protein family in Caenorhabditis elegans.</title>
        <authorList>
            <person name="Moehrlen F."/>
            <person name="Hutter H."/>
            <person name="Zwilling R."/>
        </authorList>
    </citation>
    <scope>IDENTIFICATION</scope>
    <scope>NOMENCLATURE</scope>
</reference>
<reference key="3">
    <citation type="journal article" date="2021" name="Curr. Biol.">
        <title>Innate Immunity Promotes Sleep through Epidermal Antimicrobial Peptides.</title>
        <authorList>
            <person name="Sinner M.P."/>
            <person name="Masurat F."/>
            <person name="Ewbank J.J."/>
            <person name="Pujol N."/>
            <person name="Bringmann H."/>
        </authorList>
    </citation>
    <scope>FUNCTION</scope>
    <scope>TISSUE SPECIFICITY</scope>
    <scope>DEVELOPMENTAL STAGE</scope>
    <scope>DOMAIN</scope>
</reference>
<feature type="signal peptide" evidence="3">
    <location>
        <begin position="1"/>
        <end position="25"/>
    </location>
</feature>
<feature type="propeptide" id="PRO_0000442684" evidence="2">
    <location>
        <begin position="26"/>
        <end position="114"/>
    </location>
</feature>
<feature type="chain" id="PRO_0000028942" description="Zinc metalloproteinase nas-38">
    <location>
        <begin position="115"/>
        <end position="727"/>
    </location>
</feature>
<feature type="domain" description="Peptidase M12A" evidence="6">
    <location>
        <begin position="113"/>
        <end position="312"/>
    </location>
</feature>
<feature type="domain" description="EGF-like">
    <location>
        <begin position="306"/>
        <end position="345"/>
    </location>
</feature>
<feature type="domain" description="CUB" evidence="4">
    <location>
        <begin position="353"/>
        <end position="469"/>
    </location>
</feature>
<feature type="domain" description="TSP type-1" evidence="5">
    <location>
        <begin position="610"/>
        <end position="658"/>
    </location>
</feature>
<feature type="region of interest" description="Disordered" evidence="7">
    <location>
        <begin position="473"/>
        <end position="506"/>
    </location>
</feature>
<feature type="region of interest" description="Disordered" evidence="7">
    <location>
        <begin position="532"/>
        <end position="561"/>
    </location>
</feature>
<feature type="compositionally biased region" description="Low complexity" evidence="7">
    <location>
        <begin position="535"/>
        <end position="554"/>
    </location>
</feature>
<feature type="active site" evidence="6">
    <location>
        <position position="208"/>
    </location>
</feature>
<feature type="binding site" evidence="6">
    <location>
        <position position="207"/>
    </location>
    <ligand>
        <name>Zn(2+)</name>
        <dbReference type="ChEBI" id="CHEBI:29105"/>
        <note>catalytic</note>
    </ligand>
</feature>
<feature type="binding site" evidence="6">
    <location>
        <position position="211"/>
    </location>
    <ligand>
        <name>Zn(2+)</name>
        <dbReference type="ChEBI" id="CHEBI:29105"/>
        <note>catalytic</note>
    </ligand>
</feature>
<feature type="binding site" evidence="6">
    <location>
        <position position="217"/>
    </location>
    <ligand>
        <name>Zn(2+)</name>
        <dbReference type="ChEBI" id="CHEBI:29105"/>
        <note>catalytic</note>
    </ligand>
</feature>
<feature type="glycosylation site" description="N-linked (GlcNAc...) asparagine" evidence="3">
    <location>
        <position position="330"/>
    </location>
</feature>
<feature type="glycosylation site" description="N-linked (GlcNAc...) asparagine" evidence="3">
    <location>
        <position position="653"/>
    </location>
</feature>
<feature type="glycosylation site" description="N-linked (GlcNAc...) asparagine" evidence="3">
    <location>
        <position position="714"/>
    </location>
</feature>
<feature type="disulfide bond" evidence="6">
    <location>
        <begin position="158"/>
        <end position="311"/>
    </location>
</feature>
<feature type="disulfide bond" evidence="6">
    <location>
        <begin position="179"/>
        <end position="199"/>
    </location>
</feature>
<feature type="disulfide bond" evidence="5">
    <location>
        <begin position="355"/>
        <end position="383"/>
    </location>
</feature>
<feature type="disulfide bond" evidence="5">
    <location>
        <begin position="411"/>
        <end position="432"/>
    </location>
</feature>
<feature type="disulfide bond" evidence="5">
    <location>
        <begin position="611"/>
        <end position="644"/>
    </location>
</feature>
<feature type="disulfide bond" evidence="5">
    <location>
        <begin position="623"/>
        <end position="652"/>
    </location>
</feature>
<feature type="disulfide bond" evidence="5">
    <location>
        <begin position="627"/>
        <end position="657"/>
    </location>
</feature>
<feature type="disulfide bond" evidence="5">
    <location>
        <begin position="639"/>
        <end position="644"/>
    </location>
</feature>
<organism>
    <name type="scientific">Caenorhabditis elegans</name>
    <dbReference type="NCBI Taxonomy" id="6239"/>
    <lineage>
        <taxon>Eukaryota</taxon>
        <taxon>Metazoa</taxon>
        <taxon>Ecdysozoa</taxon>
        <taxon>Nematoda</taxon>
        <taxon>Chromadorea</taxon>
        <taxon>Rhabditida</taxon>
        <taxon>Rhabditina</taxon>
        <taxon>Rhabditomorpha</taxon>
        <taxon>Rhabditoidea</taxon>
        <taxon>Rhabditidae</taxon>
        <taxon>Peloderinae</taxon>
        <taxon>Caenorhabditis</taxon>
    </lineage>
</organism>
<comment type="function">
    <text evidence="1 8">Metalloprotease (By similarity). As part of the innate immune response to molting and injury to the adult epidermis, positively regulates the activity of the transcription factor sta-2 to promote the expression of epidermal antimicrobial peptides such as nlp-29 (PubMed:33259791). Through regulating the expression of epidermal antimicrobial peptides such as nlp-29, modulates sleep duration and locomotion quiescence during the sleep-like state called lethargus which occurs during molting between larval and adult stages (PubMed:33259791). This may occur through the sleep-active RIS neuron (PubMed:33259791).</text>
</comment>
<comment type="cofactor">
    <cofactor evidence="6">
        <name>Zn(2+)</name>
        <dbReference type="ChEBI" id="CHEBI:29105"/>
    </cofactor>
    <text evidence="6">Binds 1 zinc ion per subunit.</text>
</comment>
<comment type="subcellular location">
    <subcellularLocation>
        <location evidence="9">Secreted</location>
    </subcellularLocation>
</comment>
<comment type="tissue specificity">
    <text evidence="8">Expressed in the epidermis, the excretory canal cell, duct cell, pore cell, and excretory gland cell (PubMed:33259791). Expressed in an oscillating pattern in epithelial cells with increased expression during the lethargus phase which occurs during molting between larval and adult stages (PubMed:33259791). Not expressed in seam cells or in the RIS neuron (PubMed:33259791).</text>
</comment>
<comment type="developmental stage">
    <text evidence="8">First expressed in embryos (PubMed:33259791). In larva, expressed in an oscillating pattern during the lethargus phase, which occurs during molting between larval and adult stages, with expression increasing and decreasing after the end of each lethargus period (PubMed:33259791).</text>
</comment>
<comment type="domain">
    <text evidence="8">The TSP type-1 domain may be involved in modulating sleep behaviors.</text>
</comment>
<evidence type="ECO:0000250" key="1">
    <source>
        <dbReference type="UniProtKB" id="A8Q2D1"/>
    </source>
</evidence>
<evidence type="ECO:0000250" key="2">
    <source>
        <dbReference type="UniProtKB" id="P13497"/>
    </source>
</evidence>
<evidence type="ECO:0000255" key="3"/>
<evidence type="ECO:0000255" key="4">
    <source>
        <dbReference type="PROSITE-ProRule" id="PRU00059"/>
    </source>
</evidence>
<evidence type="ECO:0000255" key="5">
    <source>
        <dbReference type="PROSITE-ProRule" id="PRU00210"/>
    </source>
</evidence>
<evidence type="ECO:0000255" key="6">
    <source>
        <dbReference type="PROSITE-ProRule" id="PRU01211"/>
    </source>
</evidence>
<evidence type="ECO:0000256" key="7">
    <source>
        <dbReference type="SAM" id="MobiDB-lite"/>
    </source>
</evidence>
<evidence type="ECO:0000269" key="8">
    <source>
    </source>
</evidence>
<evidence type="ECO:0000305" key="9"/>
<evidence type="ECO:0000312" key="10">
    <source>
        <dbReference type="WormBase" id="F57C12.1"/>
    </source>
</evidence>
<name>NAS38_CAEEL</name>
<sequence length="727" mass="81023">MPSPSYNRHIIIASCFCCLLIFSSAARVPKASKKHLARVKQLLNDEAERHNTLIQSDSVTVFDDIQRNPNTGVHHDELAVNNADEYFQGDVDLSEQQVKIIEDQFTQGKREKRKIGRNPLYKKWDTRGPISFDYAESIPFQTRQKIRSAMLLWQQHTCLRFEEGGPNVDRLEFFDGGGCSSFVGRVGGTQGISISTPGCDVVGIISHEIGHALGIFHEQARPDQERHIAINYNNIPLSRWNNFQAVGENHAETYNLPYDTGSVMHYGPYGFASDPYTPTIRTLERVQQSTIGQRAGPSFLDYQAINMAYGCTESCADLPCLRNGYTHPNNCSMCACPEGLSGRYCEQVYPSNAQCGGVIFATKEVKYITSPNYPDKFPIDTECNWIIAAPIEGRVFMEFEGDFDFLCEDTCDKAYVEVKYHSDKRLTGARYCCSLLPKNRFISFKNEMIIIMRGYRSSGAGFKAKFWSNLGEPEGVSTPLPPTTAPLPEISETTQKPEPTTVQSTTTYTTAIPRRTAKKQFFTRKPITIPLTPLTSSSTTTESTTVSSTTQSTTWLPTEPSFATGETEITTASPTITLFPSLSTILPPINSLAGVLPSTQAPDIINSVLECGCGAWSEWQGECSQQCGGCGHRLRKRECKKEACRKEEKRPCNFSACPDGTNFLINNAEFHILWRGCCVGLFRSGDQCSALETESNPFFKIINSLLNIQDAKNNDTLIAKRMMRGEH</sequence>
<protein>
    <recommendedName>
        <fullName>Zinc metalloproteinase nas-38</fullName>
        <ecNumber evidence="1">3.4.24.-</ecNumber>
    </recommendedName>
    <alternativeName>
        <fullName>Nematode astacin 38</fullName>
    </alternativeName>
</protein>
<proteinExistence type="evidence at transcript level"/>
<dbReference type="EC" id="3.4.24.-" evidence="1"/>
<dbReference type="EMBL" id="BX284606">
    <property type="protein sequence ID" value="CCD69445.2"/>
    <property type="molecule type" value="Genomic_DNA"/>
</dbReference>
<dbReference type="PIR" id="D89447">
    <property type="entry name" value="D89447"/>
</dbReference>
<dbReference type="RefSeq" id="NP_001359993.1">
    <property type="nucleotide sequence ID" value="NM_001373215.2"/>
</dbReference>
<dbReference type="RefSeq" id="NP_508120.2">
    <property type="nucleotide sequence ID" value="NM_075719.4"/>
</dbReference>
<dbReference type="SMR" id="Q20942"/>
<dbReference type="STRING" id="6239.F57C12.1.1"/>
<dbReference type="MEROPS" id="M12.A28"/>
<dbReference type="GlyCosmos" id="Q20942">
    <property type="glycosylation" value="3 sites, No reported glycans"/>
</dbReference>
<dbReference type="PaxDb" id="6239-F57C12.1"/>
<dbReference type="EnsemblMetazoa" id="F57C12.1.1">
    <property type="protein sequence ID" value="F57C12.1.1"/>
    <property type="gene ID" value="WBGene00003554"/>
</dbReference>
<dbReference type="GeneID" id="180407"/>
<dbReference type="UCSC" id="F57C12.1">
    <property type="organism name" value="c. elegans"/>
</dbReference>
<dbReference type="AGR" id="WB:WBGene00003554"/>
<dbReference type="WormBase" id="F57C12.1">
    <property type="protein sequence ID" value="CE53350"/>
    <property type="gene ID" value="WBGene00003554"/>
    <property type="gene designation" value="nas-38"/>
</dbReference>
<dbReference type="eggNOG" id="KOG3714">
    <property type="taxonomic scope" value="Eukaryota"/>
</dbReference>
<dbReference type="GeneTree" id="ENSGT00940000169640"/>
<dbReference type="HOGENOM" id="CLU_017286_1_3_1"/>
<dbReference type="InParanoid" id="Q20942"/>
<dbReference type="OrthoDB" id="291007at2759"/>
<dbReference type="PhylomeDB" id="Q20942"/>
<dbReference type="PRO" id="PR:Q20942"/>
<dbReference type="Proteomes" id="UP000001940">
    <property type="component" value="Chromosome X"/>
</dbReference>
<dbReference type="Bgee" id="WBGene00003554">
    <property type="expression patterns" value="Expressed in larva and 2 other cell types or tissues"/>
</dbReference>
<dbReference type="GO" id="GO:0005576">
    <property type="term" value="C:extracellular region"/>
    <property type="evidence" value="ECO:0007669"/>
    <property type="project" value="UniProtKB-SubCell"/>
</dbReference>
<dbReference type="GO" id="GO:0004222">
    <property type="term" value="F:metalloendopeptidase activity"/>
    <property type="evidence" value="ECO:0000318"/>
    <property type="project" value="GO_Central"/>
</dbReference>
<dbReference type="GO" id="GO:0008270">
    <property type="term" value="F:zinc ion binding"/>
    <property type="evidence" value="ECO:0007669"/>
    <property type="project" value="InterPro"/>
</dbReference>
<dbReference type="GO" id="GO:0018996">
    <property type="term" value="P:molting cycle, collagen and cuticulin-based cuticle"/>
    <property type="evidence" value="ECO:0007669"/>
    <property type="project" value="InterPro"/>
</dbReference>
<dbReference type="GO" id="GO:0036499">
    <property type="term" value="P:PERK-mediated unfolded protein response"/>
    <property type="evidence" value="ECO:0007007"/>
    <property type="project" value="WormBase"/>
</dbReference>
<dbReference type="GO" id="GO:0006508">
    <property type="term" value="P:proteolysis"/>
    <property type="evidence" value="ECO:0007669"/>
    <property type="project" value="UniProtKB-KW"/>
</dbReference>
<dbReference type="CDD" id="cd00041">
    <property type="entry name" value="CUB"/>
    <property type="match status" value="1"/>
</dbReference>
<dbReference type="CDD" id="cd04280">
    <property type="entry name" value="ZnMc_astacin_like"/>
    <property type="match status" value="1"/>
</dbReference>
<dbReference type="FunFam" id="2.60.120.290:FF:000059">
    <property type="entry name" value="Zinc metalloproteinase"/>
    <property type="match status" value="1"/>
</dbReference>
<dbReference type="FunFam" id="3.40.390.10:FF:000083">
    <property type="entry name" value="Zinc metalloproteinase"/>
    <property type="match status" value="1"/>
</dbReference>
<dbReference type="Gene3D" id="3.40.390.10">
    <property type="entry name" value="Collagenase (Catalytic Domain)"/>
    <property type="match status" value="1"/>
</dbReference>
<dbReference type="Gene3D" id="2.60.120.290">
    <property type="entry name" value="Spermadhesin, CUB domain"/>
    <property type="match status" value="1"/>
</dbReference>
<dbReference type="Gene3D" id="2.20.100.10">
    <property type="entry name" value="Thrombospondin type-1 (TSP1) repeat"/>
    <property type="match status" value="1"/>
</dbReference>
<dbReference type="InterPro" id="IPR034035">
    <property type="entry name" value="Astacin-like_dom"/>
</dbReference>
<dbReference type="InterPro" id="IPR000859">
    <property type="entry name" value="CUB_dom"/>
</dbReference>
<dbReference type="InterPro" id="IPR024079">
    <property type="entry name" value="MetalloPept_cat_dom_sf"/>
</dbReference>
<dbReference type="InterPro" id="IPR017050">
    <property type="entry name" value="Metallopeptidase_nem"/>
</dbReference>
<dbReference type="InterPro" id="IPR001506">
    <property type="entry name" value="Peptidase_M12A"/>
</dbReference>
<dbReference type="InterPro" id="IPR006026">
    <property type="entry name" value="Peptidase_Metallo"/>
</dbReference>
<dbReference type="InterPro" id="IPR035914">
    <property type="entry name" value="Sperma_CUB_dom_sf"/>
</dbReference>
<dbReference type="InterPro" id="IPR000884">
    <property type="entry name" value="TSP1_rpt"/>
</dbReference>
<dbReference type="InterPro" id="IPR036383">
    <property type="entry name" value="TSP1_rpt_sf"/>
</dbReference>
<dbReference type="PANTHER" id="PTHR10127">
    <property type="entry name" value="DISCOIDIN, CUB, EGF, LAMININ , AND ZINC METALLOPROTEASE DOMAIN CONTAINING"/>
    <property type="match status" value="1"/>
</dbReference>
<dbReference type="PANTHER" id="PTHR10127:SF810">
    <property type="entry name" value="ZINC METALLOPROTEINASE NAS-38"/>
    <property type="match status" value="1"/>
</dbReference>
<dbReference type="Pfam" id="PF01400">
    <property type="entry name" value="Astacin"/>
    <property type="match status" value="1"/>
</dbReference>
<dbReference type="Pfam" id="PF00431">
    <property type="entry name" value="CUB"/>
    <property type="match status" value="1"/>
</dbReference>
<dbReference type="PIRSF" id="PIRSF036365">
    <property type="entry name" value="Astacin_nematoda"/>
    <property type="match status" value="1"/>
</dbReference>
<dbReference type="PRINTS" id="PR00480">
    <property type="entry name" value="ASTACIN"/>
</dbReference>
<dbReference type="SMART" id="SM00042">
    <property type="entry name" value="CUB"/>
    <property type="match status" value="1"/>
</dbReference>
<dbReference type="SMART" id="SM00209">
    <property type="entry name" value="TSP1"/>
    <property type="match status" value="1"/>
</dbReference>
<dbReference type="SMART" id="SM00235">
    <property type="entry name" value="ZnMc"/>
    <property type="match status" value="1"/>
</dbReference>
<dbReference type="SUPFAM" id="SSF55486">
    <property type="entry name" value="Metalloproteases ('zincins'), catalytic domain"/>
    <property type="match status" value="1"/>
</dbReference>
<dbReference type="SUPFAM" id="SSF49854">
    <property type="entry name" value="Spermadhesin, CUB domain"/>
    <property type="match status" value="1"/>
</dbReference>
<dbReference type="PROSITE" id="PS51864">
    <property type="entry name" value="ASTACIN"/>
    <property type="match status" value="1"/>
</dbReference>
<dbReference type="PROSITE" id="PS01180">
    <property type="entry name" value="CUB"/>
    <property type="match status" value="1"/>
</dbReference>
<dbReference type="PROSITE" id="PS00022">
    <property type="entry name" value="EGF_1"/>
    <property type="match status" value="1"/>
</dbReference>
<dbReference type="PROSITE" id="PS50092">
    <property type="entry name" value="TSP1"/>
    <property type="match status" value="1"/>
</dbReference>
<dbReference type="PROSITE" id="PS00142">
    <property type="entry name" value="ZINC_PROTEASE"/>
    <property type="match status" value="1"/>
</dbReference>
<accession>Q20942</accession>
<keyword id="KW-0165">Cleavage on pair of basic residues</keyword>
<keyword id="KW-1015">Disulfide bond</keyword>
<keyword id="KW-0245">EGF-like domain</keyword>
<keyword id="KW-0325">Glycoprotein</keyword>
<keyword id="KW-0378">Hydrolase</keyword>
<keyword id="KW-0479">Metal-binding</keyword>
<keyword id="KW-0482">Metalloprotease</keyword>
<keyword id="KW-0645">Protease</keyword>
<keyword id="KW-1185">Reference proteome</keyword>
<keyword id="KW-0964">Secreted</keyword>
<keyword id="KW-0732">Signal</keyword>
<keyword id="KW-0862">Zinc</keyword>
<keyword id="KW-0865">Zymogen</keyword>
<gene>
    <name evidence="10" type="primary">nas-38</name>
    <name evidence="10" type="ORF">F57C12.1</name>
</gene>